<sequence length="661" mass="72483">MASTLFYNSMNLSAAVFSRTHFPIPINKDFPLEFSPCIHTDYHLRSRTRSGQKKCLTEVRATVASPTEVPSAPASTQPKKLRILVAGGGIGGLVFALAAKKKGFDVVVFEKDLSAVRGEGQYRGPIQIQSNALAALEAIDMDVAEEVMRVGCVTGDRINGLVDGVSGTWYVKFDTFTPAVERGLPVTRVISRIALQQILARAVGEEIIINDSNVVNFEDLGDKVNVILENGQRYEGDMLVGADGIWSKVRKNLFGLNEAVYSGYTCYTGIADFVPADINSVGYRVFLGHKQYFVSSDVGGGKMQWYAFHKESPGGVDSPNGKKERLLKIFEGWCDNVIDLLLATEEDAILRRDIYDRTPILTWGKGHVTLLGDSVHAMQPNMGQGGCMAIEDGYQLALELDKAWKKSSETGTPVDVASSLRSYENSRRLRVAIIHGMARMAALMASTYKAYLGVGLGPLSFLTKFRIPHPGRVGGRVFIDKAMPLMLSWVLGGNSSKLEGRSPSCRLSDKASDQLRNWFEDDDALERAIDGEWYLIPCGQDNDASQLICLNRDEKNPCIIGSAPHGDVSGISIAIPKPQVSEMHARISYKDGAFYLTDLRSEHGTWIADIEGKRYRVPPNFPARFRPSDAIEIGSQKVAFRVKVMKSSPGSVEKEGILQAA</sequence>
<feature type="transit peptide" description="Chloroplast" evidence="2">
    <location>
        <begin position="1"/>
        <end position="50"/>
    </location>
</feature>
<feature type="chain" id="PRO_0000020612" description="Zeaxanthin epoxidase, chloroplastic">
    <location>
        <begin position="51"/>
        <end position="661"/>
    </location>
</feature>
<feature type="domain" description="FHA" evidence="3">
    <location>
        <begin position="558"/>
        <end position="607"/>
    </location>
</feature>
<feature type="binding site" evidence="2">
    <location>
        <begin position="82"/>
        <end position="110"/>
    </location>
    <ligand>
        <name>FAD</name>
        <dbReference type="ChEBI" id="CHEBI:57692"/>
    </ligand>
</feature>
<feature type="binding site" evidence="2">
    <location>
        <begin position="360"/>
        <end position="373"/>
    </location>
    <ligand>
        <name>FAD</name>
        <dbReference type="ChEBI" id="CHEBI:57692"/>
    </ligand>
</feature>
<reference key="1">
    <citation type="online journal article" date="2000" name="Plant Gene Register">
        <title>Molecular cloning and nucleotide sequences of PA-ZE and PA-ZE2, two cDNAs from apricot fruit coding for a zeaxanthin epoxidase. Gene expression during fruit ripening.</title>
        <authorList>
            <person name="Mbeguie-A-Mbeguie D."/>
            <person name="Fils-Lycaon B.R."/>
        </authorList>
        <locator>PGR00-004</locator>
    </citation>
    <scope>NUCLEOTIDE SEQUENCE [MRNA]</scope>
    <source>
        <strain>cv. Bergeron</strain>
        <tissue>Exocarp</tissue>
        <tissue>Mesocarp</tissue>
    </source>
</reference>
<evidence type="ECO:0000250" key="1"/>
<evidence type="ECO:0000255" key="2"/>
<evidence type="ECO:0000255" key="3">
    <source>
        <dbReference type="PROSITE-ProRule" id="PRU00086"/>
    </source>
</evidence>
<evidence type="ECO:0000305" key="4"/>
<accession>O81360</accession>
<protein>
    <recommendedName>
        <fullName>Zeaxanthin epoxidase, chloroplastic</fullName>
        <ecNumber>1.14.15.21</ecNumber>
    </recommendedName>
    <alternativeName>
        <fullName>PA-ZE</fullName>
    </alternativeName>
</protein>
<proteinExistence type="evidence at transcript level"/>
<comment type="function">
    <text evidence="1">Converts zeaxanthin into antheraxanthin and subsequently violaxanthin. Involved in the epoxidation of zeaxanthin.</text>
</comment>
<comment type="catalytic activity">
    <reaction>
        <text>all-trans-zeaxanthin + 4 reduced [2Fe-2S]-[ferredoxin] + 2 O2 + 4 H(+) = all-trans-violaxanthin + 4 oxidized [2Fe-2S]-[ferredoxin] + 2 H2O</text>
        <dbReference type="Rhea" id="RHEA:32443"/>
        <dbReference type="Rhea" id="RHEA-COMP:10000"/>
        <dbReference type="Rhea" id="RHEA-COMP:10001"/>
        <dbReference type="ChEBI" id="CHEBI:15377"/>
        <dbReference type="ChEBI" id="CHEBI:15378"/>
        <dbReference type="ChEBI" id="CHEBI:15379"/>
        <dbReference type="ChEBI" id="CHEBI:27547"/>
        <dbReference type="ChEBI" id="CHEBI:33737"/>
        <dbReference type="ChEBI" id="CHEBI:33738"/>
        <dbReference type="ChEBI" id="CHEBI:35288"/>
        <dbReference type="EC" id="1.14.15.21"/>
    </reaction>
</comment>
<comment type="cofactor">
    <cofactor evidence="4">
        <name>FAD</name>
        <dbReference type="ChEBI" id="CHEBI:57692"/>
    </cofactor>
</comment>
<comment type="pathway">
    <text>Plant hormone biosynthesis; abscisate biosynthesis.</text>
</comment>
<comment type="subcellular location">
    <subcellularLocation>
        <location evidence="1">Plastid</location>
        <location evidence="1">Chloroplast</location>
    </subcellularLocation>
</comment>
<name>ABA2_PRUAR</name>
<keyword id="KW-0937">Abscisic acid biosynthesis</keyword>
<keyword id="KW-0150">Chloroplast</keyword>
<keyword id="KW-0274">FAD</keyword>
<keyword id="KW-0285">Flavoprotein</keyword>
<keyword id="KW-0560">Oxidoreductase</keyword>
<keyword id="KW-0934">Plastid</keyword>
<keyword id="KW-0809">Transit peptide</keyword>
<organism>
    <name type="scientific">Prunus armeniaca</name>
    <name type="common">Apricot</name>
    <name type="synonym">Armeniaca vulgaris</name>
    <dbReference type="NCBI Taxonomy" id="36596"/>
    <lineage>
        <taxon>Eukaryota</taxon>
        <taxon>Viridiplantae</taxon>
        <taxon>Streptophyta</taxon>
        <taxon>Embryophyta</taxon>
        <taxon>Tracheophyta</taxon>
        <taxon>Spermatophyta</taxon>
        <taxon>Magnoliopsida</taxon>
        <taxon>eudicotyledons</taxon>
        <taxon>Gunneridae</taxon>
        <taxon>Pentapetalae</taxon>
        <taxon>rosids</taxon>
        <taxon>fabids</taxon>
        <taxon>Rosales</taxon>
        <taxon>Rosaceae</taxon>
        <taxon>Amygdaloideae</taxon>
        <taxon>Amygdaleae</taxon>
        <taxon>Prunus</taxon>
    </lineage>
</organism>
<dbReference type="EC" id="1.14.15.21"/>
<dbReference type="EMBL" id="AF071888">
    <property type="protein sequence ID" value="AAC24582.1"/>
    <property type="molecule type" value="mRNA"/>
</dbReference>
<dbReference type="EMBL" id="AF159948">
    <property type="protein sequence ID" value="AAD42899.1"/>
    <property type="molecule type" value="mRNA"/>
</dbReference>
<dbReference type="SMR" id="O81360"/>
<dbReference type="UniPathway" id="UPA00090"/>
<dbReference type="GO" id="GO:0009507">
    <property type="term" value="C:chloroplast"/>
    <property type="evidence" value="ECO:0007669"/>
    <property type="project" value="UniProtKB-SubCell"/>
</dbReference>
<dbReference type="GO" id="GO:0016020">
    <property type="term" value="C:membrane"/>
    <property type="evidence" value="ECO:0007669"/>
    <property type="project" value="InterPro"/>
</dbReference>
<dbReference type="GO" id="GO:0071949">
    <property type="term" value="F:FAD binding"/>
    <property type="evidence" value="ECO:0007669"/>
    <property type="project" value="InterPro"/>
</dbReference>
<dbReference type="GO" id="GO:0052662">
    <property type="term" value="F:zeaxanthin epoxidase activity"/>
    <property type="evidence" value="ECO:0007669"/>
    <property type="project" value="UniProtKB-EC"/>
</dbReference>
<dbReference type="GO" id="GO:0009688">
    <property type="term" value="P:abscisic acid biosynthetic process"/>
    <property type="evidence" value="ECO:0007669"/>
    <property type="project" value="UniProtKB-UniPathway"/>
</dbReference>
<dbReference type="CDD" id="cd22702">
    <property type="entry name" value="FHA_ZEP-like"/>
    <property type="match status" value="1"/>
</dbReference>
<dbReference type="Gene3D" id="2.60.200.20">
    <property type="match status" value="1"/>
</dbReference>
<dbReference type="Gene3D" id="3.50.50.60">
    <property type="entry name" value="FAD/NAD(P)-binding domain"/>
    <property type="match status" value="1"/>
</dbReference>
<dbReference type="InterPro" id="IPR002938">
    <property type="entry name" value="FAD-bd"/>
</dbReference>
<dbReference type="InterPro" id="IPR036188">
    <property type="entry name" value="FAD/NAD-bd_sf"/>
</dbReference>
<dbReference type="InterPro" id="IPR000253">
    <property type="entry name" value="FHA_dom"/>
</dbReference>
<dbReference type="InterPro" id="IPR008984">
    <property type="entry name" value="SMAD_FHA_dom_sf"/>
</dbReference>
<dbReference type="InterPro" id="IPR017079">
    <property type="entry name" value="Zeaxanthin_epoxidase"/>
</dbReference>
<dbReference type="PANTHER" id="PTHR46496">
    <property type="match status" value="1"/>
</dbReference>
<dbReference type="PANTHER" id="PTHR46496:SF1">
    <property type="entry name" value="ZEAXANTHIN EPOXIDASE, CHLOROPLASTIC"/>
    <property type="match status" value="1"/>
</dbReference>
<dbReference type="Pfam" id="PF01494">
    <property type="entry name" value="FAD_binding_3"/>
    <property type="match status" value="1"/>
</dbReference>
<dbReference type="Pfam" id="PF00498">
    <property type="entry name" value="FHA"/>
    <property type="match status" value="1"/>
</dbReference>
<dbReference type="Pfam" id="PF13450">
    <property type="entry name" value="NAD_binding_8"/>
    <property type="match status" value="1"/>
</dbReference>
<dbReference type="PIRSF" id="PIRSF036989">
    <property type="entry name" value="Zeaxanthin_epoxidase"/>
    <property type="match status" value="1"/>
</dbReference>
<dbReference type="PRINTS" id="PR00420">
    <property type="entry name" value="RNGMNOXGNASE"/>
</dbReference>
<dbReference type="SMART" id="SM00240">
    <property type="entry name" value="FHA"/>
    <property type="match status" value="1"/>
</dbReference>
<dbReference type="SUPFAM" id="SSF51905">
    <property type="entry name" value="FAD/NAD(P)-binding domain"/>
    <property type="match status" value="1"/>
</dbReference>
<dbReference type="SUPFAM" id="SSF49879">
    <property type="entry name" value="SMAD/FHA domain"/>
    <property type="match status" value="1"/>
</dbReference>
<dbReference type="PROSITE" id="PS50006">
    <property type="entry name" value="FHA_DOMAIN"/>
    <property type="match status" value="1"/>
</dbReference>